<reference evidence="9" key="1">
    <citation type="journal article" date="1998" name="Science">
        <title>Genome sequence of the nematode C. elegans: a platform for investigating biology.</title>
        <authorList>
            <consortium name="The C. elegans sequencing consortium"/>
        </authorList>
    </citation>
    <scope>NUCLEOTIDE SEQUENCE [LARGE SCALE GENOMIC DNA]</scope>
    <source>
        <strain evidence="9">Bristol N2</strain>
    </source>
</reference>
<reference evidence="7" key="2">
    <citation type="journal article" date="2013" name="Genetics">
        <title>The SWI/SNF chromatin remodeling complex selectively affects multiple aspects of serotonergic neuron differentiation.</title>
        <authorList>
            <person name="Weinberg P."/>
            <person name="Flames N."/>
            <person name="Sawa H."/>
            <person name="Garriga G."/>
            <person name="Hobert O."/>
        </authorList>
    </citation>
    <scope>DEVELOPMENTAL STAGE</scope>
</reference>
<reference key="3">
    <citation type="journal article" date="2014" name="G3 (Bethesda)">
        <title>Caenorhabditis elegans SWI/SNF subunits control sequential developmental stages in the somatic gonad.</title>
        <authorList>
            <person name="Large E.E."/>
            <person name="Mathies L.D."/>
        </authorList>
    </citation>
    <scope>FUNCTION</scope>
    <scope>DISRUPTION PHENOTYPE</scope>
</reference>
<reference evidence="7" key="4">
    <citation type="journal article" date="2016" name="Genetics">
        <title>Functional Interplay of Two Paralogs Encoding SWI/SNF Chromatin-Remodeling Accessory Subunits During Caenorhabditis elegans Development.</title>
        <authorList>
            <person name="Ertl I."/>
            <person name="Porta-de-la-Riva M."/>
            <person name="Gomez-Orte E."/>
            <person name="Rubio-Pena K."/>
            <person name="Aristizabal-Corrales D."/>
            <person name="Cornes E."/>
            <person name="Fontrodona L."/>
            <person name="Osteikoetxea X."/>
            <person name="Ayuso C."/>
            <person name="Askjaer P."/>
            <person name="Cabello J."/>
            <person name="Ceron J."/>
        </authorList>
    </citation>
    <scope>FUNCTION</scope>
    <scope>SUBCELLULAR LOCATION</scope>
    <scope>DISRUPTION PHENOTYPE</scope>
    <scope>IDENTIFICATION IN THE SWI/SNF COMPLEX</scope>
    <scope>MUTAGENESIS OF 64-PRO--GLU-422</scope>
</reference>
<feature type="chain" id="PRO_0000451155" description="SWI/SNF chromatin-remodeling accessory subunit 2">
    <location>
        <begin position="1"/>
        <end position="449"/>
    </location>
</feature>
<feature type="domain" description="SWIB/MDM2" evidence="2">
    <location>
        <begin position="223"/>
        <end position="300"/>
    </location>
</feature>
<feature type="region of interest" description="Disordered" evidence="3">
    <location>
        <begin position="1"/>
        <end position="56"/>
    </location>
</feature>
<feature type="compositionally biased region" description="Polar residues" evidence="3">
    <location>
        <begin position="1"/>
        <end position="11"/>
    </location>
</feature>
<feature type="mutagenesis site" description="In ok3161; partially lethal. Gonads are smaller than wild type. The few surviving adults have egg-laying defects and a protruding vulva. F1 progeny die at the embryonic stage and the few surviving larvae do not reach adulthood. Embryos exhibit severe defects in early cell divisions that result in nuclei of different sizes." evidence="6">
    <location>
        <begin position="64"/>
        <end position="422"/>
    </location>
</feature>
<dbReference type="EMBL" id="BX284601">
    <property type="protein sequence ID" value="CCD65137.1"/>
    <property type="molecule type" value="Genomic_DNA"/>
</dbReference>
<dbReference type="PIR" id="T15185">
    <property type="entry name" value="T15185"/>
</dbReference>
<dbReference type="RefSeq" id="NP_491329.2">
    <property type="nucleotide sequence ID" value="NM_058928.5"/>
</dbReference>
<dbReference type="SMR" id="O02101"/>
<dbReference type="ComplexPortal" id="CPX-1030">
    <property type="entry name" value="BAF chromatin remodeling complex"/>
</dbReference>
<dbReference type="ComplexPortal" id="CPX-1031">
    <property type="entry name" value="PBAF chromatin remodeling complex"/>
</dbReference>
<dbReference type="FunCoup" id="O02101">
    <property type="interactions" value="3159"/>
</dbReference>
<dbReference type="IntAct" id="O02101">
    <property type="interactions" value="174"/>
</dbReference>
<dbReference type="STRING" id="6239.C18E3.2.1"/>
<dbReference type="PaxDb" id="6239-C18E3.2.1"/>
<dbReference type="PeptideAtlas" id="O02101"/>
<dbReference type="EnsemblMetazoa" id="C18E3.2.1">
    <property type="protein sequence ID" value="C18E3.2.1"/>
    <property type="gene ID" value="WBGene00015971"/>
</dbReference>
<dbReference type="GeneID" id="172018"/>
<dbReference type="KEGG" id="cel:CELE_C18E3.2"/>
<dbReference type="UCSC" id="C18E3.2.2">
    <property type="organism name" value="c. elegans"/>
</dbReference>
<dbReference type="AGR" id="WB:WBGene00015971"/>
<dbReference type="CTD" id="172018"/>
<dbReference type="WormBase" id="C18E3.2">
    <property type="protein sequence ID" value="CE30249"/>
    <property type="gene ID" value="WBGene00015971"/>
    <property type="gene designation" value="swsn-2.2"/>
</dbReference>
<dbReference type="eggNOG" id="KOG2570">
    <property type="taxonomic scope" value="Eukaryota"/>
</dbReference>
<dbReference type="GeneTree" id="ENSGT00970000196486"/>
<dbReference type="HOGENOM" id="CLU_023529_0_2_1"/>
<dbReference type="InParanoid" id="O02101"/>
<dbReference type="OMA" id="KMKFSMA"/>
<dbReference type="OrthoDB" id="10263741at2759"/>
<dbReference type="PhylomeDB" id="O02101"/>
<dbReference type="Reactome" id="R-CEL-8939243">
    <property type="pathway name" value="RUNX1 interacts with co-factors whose precise effect on RUNX1 targets is not known"/>
</dbReference>
<dbReference type="PRO" id="PR:O02101"/>
<dbReference type="Proteomes" id="UP000001940">
    <property type="component" value="Chromosome I"/>
</dbReference>
<dbReference type="Bgee" id="WBGene00015971">
    <property type="expression patterns" value="Expressed in embryo and 4 other cell types or tissues"/>
</dbReference>
<dbReference type="GO" id="GO:0000793">
    <property type="term" value="C:condensed chromosome"/>
    <property type="evidence" value="ECO:0000314"/>
    <property type="project" value="WormBase"/>
</dbReference>
<dbReference type="GO" id="GO:0005635">
    <property type="term" value="C:nuclear envelope"/>
    <property type="evidence" value="ECO:0000314"/>
    <property type="project" value="WormBase"/>
</dbReference>
<dbReference type="GO" id="GO:0005654">
    <property type="term" value="C:nucleoplasm"/>
    <property type="evidence" value="ECO:0000314"/>
    <property type="project" value="WormBase"/>
</dbReference>
<dbReference type="GO" id="GO:0005634">
    <property type="term" value="C:nucleus"/>
    <property type="evidence" value="ECO:0000318"/>
    <property type="project" value="GO_Central"/>
</dbReference>
<dbReference type="GO" id="GO:0016514">
    <property type="term" value="C:SWI/SNF complex"/>
    <property type="evidence" value="ECO:0000250"/>
    <property type="project" value="WormBase"/>
</dbReference>
<dbReference type="GO" id="GO:0061629">
    <property type="term" value="F:RNA polymerase II-specific DNA-binding transcription factor binding"/>
    <property type="evidence" value="ECO:0000250"/>
    <property type="project" value="WormBase"/>
</dbReference>
<dbReference type="GO" id="GO:0003712">
    <property type="term" value="F:transcription coregulator activity"/>
    <property type="evidence" value="ECO:0000318"/>
    <property type="project" value="GO_Central"/>
</dbReference>
<dbReference type="GO" id="GO:0006338">
    <property type="term" value="P:chromatin remodeling"/>
    <property type="evidence" value="ECO:0000303"/>
    <property type="project" value="ComplexPortal"/>
</dbReference>
<dbReference type="GO" id="GO:2000781">
    <property type="term" value="P:positive regulation of double-strand break repair"/>
    <property type="evidence" value="ECO:0000303"/>
    <property type="project" value="ComplexPortal"/>
</dbReference>
<dbReference type="GO" id="GO:2000045">
    <property type="term" value="P:regulation of G1/S transition of mitotic cell cycle"/>
    <property type="evidence" value="ECO:0000303"/>
    <property type="project" value="ComplexPortal"/>
</dbReference>
<dbReference type="GO" id="GO:0030071">
    <property type="term" value="P:regulation of mitotic metaphase/anaphase transition"/>
    <property type="evidence" value="ECO:0000303"/>
    <property type="project" value="ComplexPortal"/>
</dbReference>
<dbReference type="GO" id="GO:2000819">
    <property type="term" value="P:regulation of nucleotide-excision repair"/>
    <property type="evidence" value="ECO:0000303"/>
    <property type="project" value="ComplexPortal"/>
</dbReference>
<dbReference type="GO" id="GO:0006357">
    <property type="term" value="P:regulation of transcription by RNA polymerase II"/>
    <property type="evidence" value="ECO:0000250"/>
    <property type="project" value="WormBase"/>
</dbReference>
<dbReference type="Gene3D" id="1.10.245.10">
    <property type="entry name" value="SWIB/MDM2 domain"/>
    <property type="match status" value="1"/>
</dbReference>
<dbReference type="InterPro" id="IPR019835">
    <property type="entry name" value="SWIB_domain"/>
</dbReference>
<dbReference type="InterPro" id="IPR036885">
    <property type="entry name" value="SWIB_MDM2_dom_sf"/>
</dbReference>
<dbReference type="InterPro" id="IPR003121">
    <property type="entry name" value="SWIB_MDM2_domain"/>
</dbReference>
<dbReference type="PANTHER" id="PTHR13844">
    <property type="entry name" value="SWI/SNF-RELATED MATRIX-ASSOCIATED ACTIN-DEPENDENT REGULATOR OF CHROMATIN SUBFAMILY D"/>
    <property type="match status" value="1"/>
</dbReference>
<dbReference type="Pfam" id="PF02201">
    <property type="entry name" value="SWIB"/>
    <property type="match status" value="1"/>
</dbReference>
<dbReference type="SMART" id="SM00151">
    <property type="entry name" value="SWIB"/>
    <property type="match status" value="1"/>
</dbReference>
<dbReference type="SUPFAM" id="SSF47592">
    <property type="entry name" value="SWIB/MDM2 domain"/>
    <property type="match status" value="1"/>
</dbReference>
<dbReference type="PROSITE" id="PS51925">
    <property type="entry name" value="SWIB_MDM2"/>
    <property type="match status" value="1"/>
</dbReference>
<protein>
    <recommendedName>
        <fullName evidence="7">SWI/SNF chromatin-remodeling accessory subunit 2</fullName>
    </recommendedName>
</protein>
<evidence type="ECO:0000250" key="1">
    <source>
        <dbReference type="UniProtKB" id="Q96GM5"/>
    </source>
</evidence>
<evidence type="ECO:0000255" key="2">
    <source>
        <dbReference type="PROSITE-ProRule" id="PRU01273"/>
    </source>
</evidence>
<evidence type="ECO:0000256" key="3">
    <source>
        <dbReference type="SAM" id="MobiDB-lite"/>
    </source>
</evidence>
<evidence type="ECO:0000269" key="4">
    <source>
    </source>
</evidence>
<evidence type="ECO:0000269" key="5">
    <source>
    </source>
</evidence>
<evidence type="ECO:0000269" key="6">
    <source>
    </source>
</evidence>
<evidence type="ECO:0000305" key="7"/>
<evidence type="ECO:0000305" key="8">
    <source>
    </source>
</evidence>
<evidence type="ECO:0000312" key="9">
    <source>
        <dbReference type="Proteomes" id="UP000001940"/>
    </source>
</evidence>
<evidence type="ECO:0000312" key="10">
    <source>
        <dbReference type="WormBase" id="C18E3.2"/>
    </source>
</evidence>
<proteinExistence type="evidence at protein level"/>
<sequence>MHSQQRPNPQMNRHPYGTPGSAPQMRRPGGFAGQPPQMHGPRMVAPPAAPLPKKKKYADKCIHPKIRELEPDAENYMALLASEQKLDSTLSRKKLDIQEALKRPSKVKKRLRIYISHTFIEEKQPEKDTDEASLPMWELRVEGRLLDEQPPAPAIPGQRPVPKRKFSSFFKSLVIELDKEMYGPDQHLVEWHRTPQTNETDGFQVKRAGDRPVKCRILLLLDNHPAKFKLHPRLAKVLGIATETRPKIIEALWQYIKTHGLQDPQERDIINCDTFLSQCFGVNRMRFMEVPNKLHQLLQQTDPLEFNHIIQRPKEGQEQVSTCYDIDVEMEDPVKQFMHTFVHSPGLANDIQTLDQKCYDIIEQINELKTRRDFYARFYTEPAEFIKSWVMSQNSDLKTMNELSGDLEAERFAESYVRPETEEGVQRYMFQKVNQKRHELEQSLGVRSN</sequence>
<name>SWIC2_CAEEL</name>
<accession>O02101</accession>
<gene>
    <name evidence="10" type="primary">swsn-2.2</name>
    <name evidence="10" type="ORF">C18E3.2</name>
</gene>
<organism evidence="9">
    <name type="scientific">Caenorhabditis elegans</name>
    <dbReference type="NCBI Taxonomy" id="6239"/>
    <lineage>
        <taxon>Eukaryota</taxon>
        <taxon>Metazoa</taxon>
        <taxon>Ecdysozoa</taxon>
        <taxon>Nematoda</taxon>
        <taxon>Chromadorea</taxon>
        <taxon>Rhabditida</taxon>
        <taxon>Rhabditina</taxon>
        <taxon>Rhabditomorpha</taxon>
        <taxon>Rhabditoidea</taxon>
        <taxon>Rhabditidae</taxon>
        <taxon>Peloderinae</taxon>
        <taxon>Caenorhabditis</taxon>
    </lineage>
</organism>
<keyword id="KW-0156">Chromatin regulator</keyword>
<keyword id="KW-0158">Chromosome</keyword>
<keyword id="KW-0539">Nucleus</keyword>
<keyword id="KW-1185">Reference proteome</keyword>
<keyword id="KW-0804">Transcription</keyword>
<keyword id="KW-0805">Transcription regulation</keyword>
<comment type="function">
    <text evidence="1 5 6">Involved in transcriptional activation and repression of select genes by chromatin remodeling (alteration of DNA-nucleosome topology). Component of SWI/SNF chromatin remodeling complexes that carry out key enzymatic activities, changing chromatin structure by altering DNA-histone contacts within a nucleosome in an ATP-dependent manner (By similarity). Probably regulates vulva development through the let-60/Ras pathway (PubMed:26739451). Involved in nuclear reassembly after mitosis and recruitment of nuclear envelope protein, mel-28, to the nuclear periphery in the early embryo and in the adult germline (PubMed:26739451). Involved in gonadogenesis (PubMed:24402584, PubMed:26739451).</text>
</comment>
<comment type="subunit">
    <text evidence="8">Component of the multiprotein chromatin-remodeling complexes SWI/SNF: SWI/SNF-A (BAF), SWI/SNF-B (PBAF) and related complexes (Probable). The canonical complex contains a catalytic subunit swsn-4, core subunits swsn-1 and swsn-5, and accessory subunits swsn-3, swsn-6, phf-10, dpff-1, swsn-9 and either ham-3/swsn-2.1 or swsn-2.2 (Probable).</text>
</comment>
<comment type="subcellular location">
    <subcellularLocation>
        <location evidence="6">Nucleus</location>
        <location evidence="6">Nucleoplasm</location>
    </subcellularLocation>
    <subcellularLocation>
        <location evidence="6">Chromosome</location>
    </subcellularLocation>
    <subcellularLocation>
        <location evidence="6">Nucleus envelope</location>
    </subcellularLocation>
    <text evidence="6">Localizes to mitotic chromosomes in the early embryo.</text>
</comment>
<comment type="developmental stage">
    <text evidence="4">Expression begins at the gastrulation stage (PubMed:23457234). Expressed broadly at L1 larval stage except in the intestine (PubMed:23457234). Expression decreases in the subsequent larval stages and is absent in adults (PubMed:23457234).</text>
</comment>
<comment type="disruption phenotype">
    <text evidence="5 6">Some knockouts exhibit maternal-effect embryonic or larval lethality (PubMed:24402584). Germ lines are smaller (PubMed:26739451). RNAi-mediated knockdown reduces brood size (PubMed:26739451). Simultaneous knockouts of ham-3 do not survive beyond the L2 larval stage (PubMed:24402584). Simultaneous RNAi-mediated knockdown of ham-3 at the L1 larval stage causes sterility, while at the L3 larval stage, causes embryonic lethality for the progeny (PubMed:26739451). The sterile animals resulting from simultaneous RNAi-mediated knockdown of ham-3 at the L1 larval stage develop smaller germ lines (PubMed:26739451). Simultaneous RNAi-mediated knockdown of ham-3 also results in vulva protrusion and ectopic expression of egl-17 in cells derived from the vulval precursor cells P5.p and P7.p (PubMed:26739451).</text>
</comment>
<comment type="similarity">
    <text evidence="7">Belongs to the SMARCD family.</text>
</comment>